<evidence type="ECO:0000255" key="1">
    <source>
        <dbReference type="HAMAP-Rule" id="MF_01694"/>
    </source>
</evidence>
<evidence type="ECO:0000255" key="2">
    <source>
        <dbReference type="PROSITE-ProRule" id="PRU01266"/>
    </source>
</evidence>
<sequence>MTATQPVHLVRPAPVHVHPSSERWSVEAIEALFALPFNDLIFRAQQVHREHFDANAVQRSTLLSIKTGGCPEDCAYCPQSVHHDTGVEADKLMDVATVRQAAQAAAAAGATRFCMGAAWREPKDRDIEKVVELVREVKSLGLEACCTLGMLSKPQAQALKEAGVDYYNHNLDTAPEAYGRIISTRVYEERLQTLAHVRDAGMNVCCGGIVGMGESRRERAGLVAQLANLDPHPESVPINELVQVEGTPLAGSDKLDPFEFVRTIAVARITMPTAYVRLSAGRQEMGDAIQALCFLAGANSIFYGDKLLTTGNPDVERDEALFERLGLTSA</sequence>
<comment type="function">
    <text evidence="1">Catalyzes the conversion of dethiobiotin (DTB) to biotin by the insertion of a sulfur atom into dethiobiotin via a radical-based mechanism.</text>
</comment>
<comment type="catalytic activity">
    <reaction evidence="1">
        <text>(4R,5S)-dethiobiotin + (sulfur carrier)-SH + 2 reduced [2Fe-2S]-[ferredoxin] + 2 S-adenosyl-L-methionine = (sulfur carrier)-H + biotin + 2 5'-deoxyadenosine + 2 L-methionine + 2 oxidized [2Fe-2S]-[ferredoxin]</text>
        <dbReference type="Rhea" id="RHEA:22060"/>
        <dbReference type="Rhea" id="RHEA-COMP:10000"/>
        <dbReference type="Rhea" id="RHEA-COMP:10001"/>
        <dbReference type="Rhea" id="RHEA-COMP:14737"/>
        <dbReference type="Rhea" id="RHEA-COMP:14739"/>
        <dbReference type="ChEBI" id="CHEBI:17319"/>
        <dbReference type="ChEBI" id="CHEBI:29917"/>
        <dbReference type="ChEBI" id="CHEBI:33737"/>
        <dbReference type="ChEBI" id="CHEBI:33738"/>
        <dbReference type="ChEBI" id="CHEBI:57586"/>
        <dbReference type="ChEBI" id="CHEBI:57844"/>
        <dbReference type="ChEBI" id="CHEBI:59789"/>
        <dbReference type="ChEBI" id="CHEBI:64428"/>
        <dbReference type="ChEBI" id="CHEBI:149473"/>
        <dbReference type="EC" id="2.8.1.6"/>
    </reaction>
</comment>
<comment type="cofactor">
    <cofactor evidence="1">
        <name>[4Fe-4S] cluster</name>
        <dbReference type="ChEBI" id="CHEBI:49883"/>
    </cofactor>
    <text evidence="1">Binds 1 [4Fe-4S] cluster. The cluster is coordinated with 3 cysteines and an exchangeable S-adenosyl-L-methionine.</text>
</comment>
<comment type="cofactor">
    <cofactor evidence="1">
        <name>[2Fe-2S] cluster</name>
        <dbReference type="ChEBI" id="CHEBI:190135"/>
    </cofactor>
    <text evidence="1">Binds 1 [2Fe-2S] cluster. The cluster is coordinated with 3 cysteines and 1 arginine.</text>
</comment>
<comment type="pathway">
    <text evidence="1">Cofactor biosynthesis; biotin biosynthesis; biotin from 7,8-diaminononanoate: step 2/2.</text>
</comment>
<comment type="subunit">
    <text evidence="1">Homodimer.</text>
</comment>
<comment type="similarity">
    <text evidence="1">Belongs to the radical SAM superfamily. Biotin synthase family.</text>
</comment>
<protein>
    <recommendedName>
        <fullName evidence="1">Biotin synthase</fullName>
        <ecNumber evidence="1">2.8.1.6</ecNumber>
    </recommendedName>
</protein>
<gene>
    <name evidence="1" type="primary">bioB</name>
    <name type="ordered locus">Mpe_A1786</name>
</gene>
<accession>A2SGQ6</accession>
<name>BIOB_METPP</name>
<keyword id="KW-0001">2Fe-2S</keyword>
<keyword id="KW-0004">4Fe-4S</keyword>
<keyword id="KW-0093">Biotin biosynthesis</keyword>
<keyword id="KW-0408">Iron</keyword>
<keyword id="KW-0411">Iron-sulfur</keyword>
<keyword id="KW-0479">Metal-binding</keyword>
<keyword id="KW-1185">Reference proteome</keyword>
<keyword id="KW-0949">S-adenosyl-L-methionine</keyword>
<keyword id="KW-0808">Transferase</keyword>
<organism>
    <name type="scientific">Methylibium petroleiphilum (strain ATCC BAA-1232 / LMG 22953 / PM1)</name>
    <dbReference type="NCBI Taxonomy" id="420662"/>
    <lineage>
        <taxon>Bacteria</taxon>
        <taxon>Pseudomonadati</taxon>
        <taxon>Pseudomonadota</taxon>
        <taxon>Betaproteobacteria</taxon>
        <taxon>Burkholderiales</taxon>
        <taxon>Sphaerotilaceae</taxon>
        <taxon>Methylibium</taxon>
    </lineage>
</organism>
<reference key="1">
    <citation type="journal article" date="2007" name="J. Bacteriol.">
        <title>Whole-genome analysis of the methyl tert-butyl ether-degrading beta-proteobacterium Methylibium petroleiphilum PM1.</title>
        <authorList>
            <person name="Kane S.R."/>
            <person name="Chakicherla A.Y."/>
            <person name="Chain P.S.G."/>
            <person name="Schmidt R."/>
            <person name="Shin M.W."/>
            <person name="Legler T.C."/>
            <person name="Scow K.M."/>
            <person name="Larimer F.W."/>
            <person name="Lucas S.M."/>
            <person name="Richardson P.M."/>
            <person name="Hristova K.R."/>
        </authorList>
    </citation>
    <scope>NUCLEOTIDE SEQUENCE [LARGE SCALE GENOMIC DNA]</scope>
    <source>
        <strain>ATCC BAA-1232 / LMG 22953 / PM1</strain>
    </source>
</reference>
<proteinExistence type="inferred from homology"/>
<dbReference type="EC" id="2.8.1.6" evidence="1"/>
<dbReference type="EMBL" id="CP000555">
    <property type="protein sequence ID" value="ABM94745.1"/>
    <property type="molecule type" value="Genomic_DNA"/>
</dbReference>
<dbReference type="RefSeq" id="WP_011829382.1">
    <property type="nucleotide sequence ID" value="NC_008825.1"/>
</dbReference>
<dbReference type="SMR" id="A2SGQ6"/>
<dbReference type="STRING" id="420662.Mpe_A1786"/>
<dbReference type="KEGG" id="mpt:Mpe_A1786"/>
<dbReference type="eggNOG" id="COG0502">
    <property type="taxonomic scope" value="Bacteria"/>
</dbReference>
<dbReference type="HOGENOM" id="CLU_033172_1_2_4"/>
<dbReference type="UniPathway" id="UPA00078">
    <property type="reaction ID" value="UER00162"/>
</dbReference>
<dbReference type="Proteomes" id="UP000000366">
    <property type="component" value="Chromosome"/>
</dbReference>
<dbReference type="GO" id="GO:0051537">
    <property type="term" value="F:2 iron, 2 sulfur cluster binding"/>
    <property type="evidence" value="ECO:0007669"/>
    <property type="project" value="UniProtKB-KW"/>
</dbReference>
<dbReference type="GO" id="GO:0051539">
    <property type="term" value="F:4 iron, 4 sulfur cluster binding"/>
    <property type="evidence" value="ECO:0007669"/>
    <property type="project" value="UniProtKB-KW"/>
</dbReference>
<dbReference type="GO" id="GO:0004076">
    <property type="term" value="F:biotin synthase activity"/>
    <property type="evidence" value="ECO:0007669"/>
    <property type="project" value="UniProtKB-UniRule"/>
</dbReference>
<dbReference type="GO" id="GO:0005506">
    <property type="term" value="F:iron ion binding"/>
    <property type="evidence" value="ECO:0007669"/>
    <property type="project" value="UniProtKB-UniRule"/>
</dbReference>
<dbReference type="GO" id="GO:0009102">
    <property type="term" value="P:biotin biosynthetic process"/>
    <property type="evidence" value="ECO:0007669"/>
    <property type="project" value="UniProtKB-UniRule"/>
</dbReference>
<dbReference type="CDD" id="cd01335">
    <property type="entry name" value="Radical_SAM"/>
    <property type="match status" value="1"/>
</dbReference>
<dbReference type="FunFam" id="3.20.20.70:FF:000011">
    <property type="entry name" value="Biotin synthase"/>
    <property type="match status" value="1"/>
</dbReference>
<dbReference type="Gene3D" id="3.20.20.70">
    <property type="entry name" value="Aldolase class I"/>
    <property type="match status" value="1"/>
</dbReference>
<dbReference type="HAMAP" id="MF_01694">
    <property type="entry name" value="BioB"/>
    <property type="match status" value="1"/>
</dbReference>
<dbReference type="InterPro" id="IPR013785">
    <property type="entry name" value="Aldolase_TIM"/>
</dbReference>
<dbReference type="InterPro" id="IPR010722">
    <property type="entry name" value="BATS_dom"/>
</dbReference>
<dbReference type="InterPro" id="IPR002684">
    <property type="entry name" value="Biotin_synth/BioAB"/>
</dbReference>
<dbReference type="InterPro" id="IPR024177">
    <property type="entry name" value="Biotin_synthase"/>
</dbReference>
<dbReference type="InterPro" id="IPR006638">
    <property type="entry name" value="Elp3/MiaA/NifB-like_rSAM"/>
</dbReference>
<dbReference type="InterPro" id="IPR007197">
    <property type="entry name" value="rSAM"/>
</dbReference>
<dbReference type="NCBIfam" id="TIGR00433">
    <property type="entry name" value="bioB"/>
    <property type="match status" value="1"/>
</dbReference>
<dbReference type="PANTHER" id="PTHR22976">
    <property type="entry name" value="BIOTIN SYNTHASE"/>
    <property type="match status" value="1"/>
</dbReference>
<dbReference type="PANTHER" id="PTHR22976:SF2">
    <property type="entry name" value="BIOTIN SYNTHASE, MITOCHONDRIAL"/>
    <property type="match status" value="1"/>
</dbReference>
<dbReference type="Pfam" id="PF06968">
    <property type="entry name" value="BATS"/>
    <property type="match status" value="1"/>
</dbReference>
<dbReference type="Pfam" id="PF04055">
    <property type="entry name" value="Radical_SAM"/>
    <property type="match status" value="1"/>
</dbReference>
<dbReference type="PIRSF" id="PIRSF001619">
    <property type="entry name" value="Biotin_synth"/>
    <property type="match status" value="1"/>
</dbReference>
<dbReference type="SFLD" id="SFLDF00272">
    <property type="entry name" value="biotin_synthase"/>
    <property type="match status" value="1"/>
</dbReference>
<dbReference type="SFLD" id="SFLDG01278">
    <property type="entry name" value="biotin_synthase_like"/>
    <property type="match status" value="1"/>
</dbReference>
<dbReference type="SMART" id="SM00876">
    <property type="entry name" value="BATS"/>
    <property type="match status" value="1"/>
</dbReference>
<dbReference type="SMART" id="SM00729">
    <property type="entry name" value="Elp3"/>
    <property type="match status" value="1"/>
</dbReference>
<dbReference type="SUPFAM" id="SSF102114">
    <property type="entry name" value="Radical SAM enzymes"/>
    <property type="match status" value="1"/>
</dbReference>
<dbReference type="PROSITE" id="PS51918">
    <property type="entry name" value="RADICAL_SAM"/>
    <property type="match status" value="1"/>
</dbReference>
<feature type="chain" id="PRO_0000381469" description="Biotin synthase">
    <location>
        <begin position="1"/>
        <end position="330"/>
    </location>
</feature>
<feature type="domain" description="Radical SAM core" evidence="2">
    <location>
        <begin position="55"/>
        <end position="282"/>
    </location>
</feature>
<feature type="binding site" evidence="1">
    <location>
        <position position="70"/>
    </location>
    <ligand>
        <name>[4Fe-4S] cluster</name>
        <dbReference type="ChEBI" id="CHEBI:49883"/>
        <note>4Fe-4S-S-AdoMet</note>
    </ligand>
</feature>
<feature type="binding site" evidence="1">
    <location>
        <position position="74"/>
    </location>
    <ligand>
        <name>[4Fe-4S] cluster</name>
        <dbReference type="ChEBI" id="CHEBI:49883"/>
        <note>4Fe-4S-S-AdoMet</note>
    </ligand>
</feature>
<feature type="binding site" evidence="1">
    <location>
        <position position="77"/>
    </location>
    <ligand>
        <name>[4Fe-4S] cluster</name>
        <dbReference type="ChEBI" id="CHEBI:49883"/>
        <note>4Fe-4S-S-AdoMet</note>
    </ligand>
</feature>
<feature type="binding site" evidence="1">
    <location>
        <position position="114"/>
    </location>
    <ligand>
        <name>[2Fe-2S] cluster</name>
        <dbReference type="ChEBI" id="CHEBI:190135"/>
    </ligand>
</feature>
<feature type="binding site" evidence="1">
    <location>
        <position position="145"/>
    </location>
    <ligand>
        <name>[2Fe-2S] cluster</name>
        <dbReference type="ChEBI" id="CHEBI:190135"/>
    </ligand>
</feature>
<feature type="binding site" evidence="1">
    <location>
        <position position="205"/>
    </location>
    <ligand>
        <name>[2Fe-2S] cluster</name>
        <dbReference type="ChEBI" id="CHEBI:190135"/>
    </ligand>
</feature>
<feature type="binding site" evidence="1">
    <location>
        <position position="277"/>
    </location>
    <ligand>
        <name>[2Fe-2S] cluster</name>
        <dbReference type="ChEBI" id="CHEBI:190135"/>
    </ligand>
</feature>